<sequence>MGGKEMRNCKELKHEKNGNVTEKVGKNKGKSKKVSKDESLLSFDLFLEGKEHSAYKFMGAHFITENRKRGVRFTTWAPRASKIYVIGDFNNWELKEEYSMKKINERGIWSLFLPKLEEGIKYKFAVVNECGNNTVYKADPYAFKSELRPNTASVLTKIKSFRWGDKRWLNKREKEGLDNKPMNIYELHLGSWKRKDGEFMTYEEISEVLVEYIKEMGYTHVEFMPINEHPLDASWGYQGVGYYSVTSRYGDLNGLKTLINKLHKNNIGVLLDWVPSHFCKDEHGLFMFDGSPTYEYEAWWKANNEGWGTCNFDLGRPEVKSFLFSNAMYWINEFHVDGLRVDAVSNMLYLDYGREYGEWEPNIYGGNGNLEAIAFLKELNTIIKKEGKGAITVAEESTSWEGITKPVEEDGLGFDYKWNMGWMNDTLSYIELDPIYRKYHHNKMNFSMMYNYSEKFILPISHDEVVHGKKSLINKMWGDDWKKYAGLRVYASFMMGHPGKKLMFMGCEFGQFVEWREWEELQWNVIEEFDIHRKTKEYFKALNKFYLENSSLWSLDYEEEGFKWIDADNSEESVLSFIRIGKNKKEKLIFICNFTPEVYYDFKVGVPELGEYVEAFNSDALEFGGAGNIVGDSILKATEESFKDFDYSISVKVPPLGTLVLKVK</sequence>
<gene>
    <name type="primary">glgB2</name>
    <name type="ordered locus">CPE1588</name>
</gene>
<protein>
    <recommendedName>
        <fullName>1,4-alpha-glucan branching enzyme GlgB 2</fullName>
        <ecNumber>2.4.1.18</ecNumber>
    </recommendedName>
    <alternativeName>
        <fullName>1,4-alpha-D-glucan:1,4-alpha-D-glucan 6-glucosyl-transferase 2</fullName>
    </alternativeName>
    <alternativeName>
        <fullName>Alpha-(1-&gt;4)-glucan branching enzyme 2</fullName>
    </alternativeName>
    <alternativeName>
        <fullName>Glycogen branching enzyme 2</fullName>
        <shortName>BE 2</shortName>
    </alternativeName>
</protein>
<name>GLGB2_CLOPE</name>
<feature type="chain" id="PRO_0000188696" description="1,4-alpha-glucan branching enzyme GlgB 2">
    <location>
        <begin position="1"/>
        <end position="664"/>
    </location>
</feature>
<feature type="region of interest" description="Disordered" evidence="2">
    <location>
        <begin position="1"/>
        <end position="31"/>
    </location>
</feature>
<feature type="compositionally biased region" description="Basic and acidic residues" evidence="2">
    <location>
        <begin position="1"/>
        <end position="17"/>
    </location>
</feature>
<feature type="active site" description="Nucleophile" evidence="1">
    <location>
        <position position="342"/>
    </location>
</feature>
<feature type="active site" description="Proton donor" evidence="1">
    <location>
        <position position="395"/>
    </location>
</feature>
<evidence type="ECO:0000250" key="1"/>
<evidence type="ECO:0000256" key="2">
    <source>
        <dbReference type="SAM" id="MobiDB-lite"/>
    </source>
</evidence>
<evidence type="ECO:0000305" key="3"/>
<organism>
    <name type="scientific">Clostridium perfringens (strain 13 / Type A)</name>
    <dbReference type="NCBI Taxonomy" id="195102"/>
    <lineage>
        <taxon>Bacteria</taxon>
        <taxon>Bacillati</taxon>
        <taxon>Bacillota</taxon>
        <taxon>Clostridia</taxon>
        <taxon>Eubacteriales</taxon>
        <taxon>Clostridiaceae</taxon>
        <taxon>Clostridium</taxon>
    </lineage>
</organism>
<dbReference type="EC" id="2.4.1.18"/>
<dbReference type="EMBL" id="BA000016">
    <property type="protein sequence ID" value="BAB81294.1"/>
    <property type="molecule type" value="Genomic_DNA"/>
</dbReference>
<dbReference type="RefSeq" id="WP_011010524.1">
    <property type="nucleotide sequence ID" value="NC_003366.1"/>
</dbReference>
<dbReference type="SMR" id="Q8XK15"/>
<dbReference type="STRING" id="195102.gene:10490852"/>
<dbReference type="CAZy" id="CBM48">
    <property type="family name" value="Carbohydrate-Binding Module Family 48"/>
</dbReference>
<dbReference type="CAZy" id="GH13">
    <property type="family name" value="Glycoside Hydrolase Family 13"/>
</dbReference>
<dbReference type="KEGG" id="cpe:CPE1588"/>
<dbReference type="HOGENOM" id="CLU_004245_4_0_9"/>
<dbReference type="UniPathway" id="UPA00164"/>
<dbReference type="Proteomes" id="UP000000818">
    <property type="component" value="Chromosome"/>
</dbReference>
<dbReference type="GO" id="GO:0005829">
    <property type="term" value="C:cytosol"/>
    <property type="evidence" value="ECO:0007669"/>
    <property type="project" value="TreeGrafter"/>
</dbReference>
<dbReference type="GO" id="GO:0003844">
    <property type="term" value="F:1,4-alpha-glucan branching enzyme activity"/>
    <property type="evidence" value="ECO:0007669"/>
    <property type="project" value="UniProtKB-UniRule"/>
</dbReference>
<dbReference type="GO" id="GO:0043169">
    <property type="term" value="F:cation binding"/>
    <property type="evidence" value="ECO:0007669"/>
    <property type="project" value="InterPro"/>
</dbReference>
<dbReference type="GO" id="GO:0004553">
    <property type="term" value="F:hydrolase activity, hydrolyzing O-glycosyl compounds"/>
    <property type="evidence" value="ECO:0007669"/>
    <property type="project" value="InterPro"/>
</dbReference>
<dbReference type="GO" id="GO:0005978">
    <property type="term" value="P:glycogen biosynthetic process"/>
    <property type="evidence" value="ECO:0007669"/>
    <property type="project" value="UniProtKB-UniRule"/>
</dbReference>
<dbReference type="CDD" id="cd11322">
    <property type="entry name" value="AmyAc_Glg_BE"/>
    <property type="match status" value="1"/>
</dbReference>
<dbReference type="CDD" id="cd02855">
    <property type="entry name" value="E_set_GBE_prok_N"/>
    <property type="match status" value="1"/>
</dbReference>
<dbReference type="FunFam" id="2.60.40.1180:FF:000002">
    <property type="entry name" value="1,4-alpha-glucan branching enzyme GlgB"/>
    <property type="match status" value="1"/>
</dbReference>
<dbReference type="FunFam" id="3.20.20.80:FF:000003">
    <property type="entry name" value="1,4-alpha-glucan branching enzyme GlgB"/>
    <property type="match status" value="1"/>
</dbReference>
<dbReference type="Gene3D" id="3.20.20.80">
    <property type="entry name" value="Glycosidases"/>
    <property type="match status" value="1"/>
</dbReference>
<dbReference type="Gene3D" id="2.60.40.1180">
    <property type="entry name" value="Golgi alpha-mannosidase II"/>
    <property type="match status" value="1"/>
</dbReference>
<dbReference type="Gene3D" id="2.60.40.10">
    <property type="entry name" value="Immunoglobulins"/>
    <property type="match status" value="1"/>
</dbReference>
<dbReference type="HAMAP" id="MF_00685">
    <property type="entry name" value="GlgB"/>
    <property type="match status" value="1"/>
</dbReference>
<dbReference type="InterPro" id="IPR006048">
    <property type="entry name" value="A-amylase/branching_C"/>
</dbReference>
<dbReference type="InterPro" id="IPR037439">
    <property type="entry name" value="Branching_enzy"/>
</dbReference>
<dbReference type="InterPro" id="IPR006407">
    <property type="entry name" value="GlgB"/>
</dbReference>
<dbReference type="InterPro" id="IPR044143">
    <property type="entry name" value="GlgB_N_E_set_prok"/>
</dbReference>
<dbReference type="InterPro" id="IPR006047">
    <property type="entry name" value="Glyco_hydro_13_cat_dom"/>
</dbReference>
<dbReference type="InterPro" id="IPR004193">
    <property type="entry name" value="Glyco_hydro_13_N"/>
</dbReference>
<dbReference type="InterPro" id="IPR013780">
    <property type="entry name" value="Glyco_hydro_b"/>
</dbReference>
<dbReference type="InterPro" id="IPR017853">
    <property type="entry name" value="Glycoside_hydrolase_SF"/>
</dbReference>
<dbReference type="InterPro" id="IPR013783">
    <property type="entry name" value="Ig-like_fold"/>
</dbReference>
<dbReference type="InterPro" id="IPR014756">
    <property type="entry name" value="Ig_E-set"/>
</dbReference>
<dbReference type="NCBIfam" id="TIGR01515">
    <property type="entry name" value="branching_enzym"/>
    <property type="match status" value="1"/>
</dbReference>
<dbReference type="NCBIfam" id="NF003811">
    <property type="entry name" value="PRK05402.1"/>
    <property type="match status" value="1"/>
</dbReference>
<dbReference type="NCBIfam" id="NF008967">
    <property type="entry name" value="PRK12313.1"/>
    <property type="match status" value="1"/>
</dbReference>
<dbReference type="PANTHER" id="PTHR43651">
    <property type="entry name" value="1,4-ALPHA-GLUCAN-BRANCHING ENZYME"/>
    <property type="match status" value="1"/>
</dbReference>
<dbReference type="PANTHER" id="PTHR43651:SF3">
    <property type="entry name" value="1,4-ALPHA-GLUCAN-BRANCHING ENZYME"/>
    <property type="match status" value="1"/>
</dbReference>
<dbReference type="Pfam" id="PF00128">
    <property type="entry name" value="Alpha-amylase"/>
    <property type="match status" value="2"/>
</dbReference>
<dbReference type="Pfam" id="PF02806">
    <property type="entry name" value="Alpha-amylase_C"/>
    <property type="match status" value="1"/>
</dbReference>
<dbReference type="Pfam" id="PF02922">
    <property type="entry name" value="CBM_48"/>
    <property type="match status" value="1"/>
</dbReference>
<dbReference type="PIRSF" id="PIRSF000463">
    <property type="entry name" value="GlgB"/>
    <property type="match status" value="1"/>
</dbReference>
<dbReference type="SMART" id="SM00642">
    <property type="entry name" value="Aamy"/>
    <property type="match status" value="1"/>
</dbReference>
<dbReference type="SUPFAM" id="SSF51445">
    <property type="entry name" value="(Trans)glycosidases"/>
    <property type="match status" value="1"/>
</dbReference>
<dbReference type="SUPFAM" id="SSF81296">
    <property type="entry name" value="E set domains"/>
    <property type="match status" value="1"/>
</dbReference>
<dbReference type="SUPFAM" id="SSF51011">
    <property type="entry name" value="Glycosyl hydrolase domain"/>
    <property type="match status" value="1"/>
</dbReference>
<comment type="function">
    <text evidence="1">Catalyzes the formation of the alpha-1,6-glucosidic linkages in glycogen by scission of a 1,4-alpha-linked oligosaccharide from growing alpha-1,4-glucan chains and the subsequent attachment of the oligosaccharide to the alpha-1,6 position.</text>
</comment>
<comment type="catalytic activity">
    <reaction>
        <text>Transfers a segment of a (1-&gt;4)-alpha-D-glucan chain to a primary hydroxy group in a similar glucan chain.</text>
        <dbReference type="EC" id="2.4.1.18"/>
    </reaction>
</comment>
<comment type="pathway">
    <text>Glycan biosynthesis; glycogen biosynthesis.</text>
</comment>
<comment type="subunit">
    <text evidence="1">Monomer.</text>
</comment>
<comment type="similarity">
    <text evidence="3">Belongs to the glycosyl hydrolase 13 family. GlgB subfamily.</text>
</comment>
<reference key="1">
    <citation type="journal article" date="2002" name="Proc. Natl. Acad. Sci. U.S.A.">
        <title>Complete genome sequence of Clostridium perfringens, an anaerobic flesh-eater.</title>
        <authorList>
            <person name="Shimizu T."/>
            <person name="Ohtani K."/>
            <person name="Hirakawa H."/>
            <person name="Ohshima K."/>
            <person name="Yamashita A."/>
            <person name="Shiba T."/>
            <person name="Ogasawara N."/>
            <person name="Hattori M."/>
            <person name="Kuhara S."/>
            <person name="Hayashi H."/>
        </authorList>
    </citation>
    <scope>NUCLEOTIDE SEQUENCE [LARGE SCALE GENOMIC DNA]</scope>
    <source>
        <strain>13 / Type A</strain>
    </source>
</reference>
<proteinExistence type="inferred from homology"/>
<keyword id="KW-0119">Carbohydrate metabolism</keyword>
<keyword id="KW-0320">Glycogen biosynthesis</keyword>
<keyword id="KW-0321">Glycogen metabolism</keyword>
<keyword id="KW-0328">Glycosyltransferase</keyword>
<keyword id="KW-1185">Reference proteome</keyword>
<keyword id="KW-0808">Transferase</keyword>
<accession>Q8XK15</accession>